<name>DER_SALTY</name>
<comment type="function">
    <text evidence="1">GTPase that plays an essential role in the late steps of ribosome biogenesis.</text>
</comment>
<comment type="biophysicochemical properties">
    <kinetics>
        <KM evidence="2">12.7 uM for GTP, high affinity site</KM>
        <KM evidence="2">0.6 uM for GDP, high affinity site</KM>
        <KM evidence="2">3.2 uM for GDP, low affinity site</KM>
        <text>KM for GTP in the low affinity site could not be measured, experiments performed in the absence of Mg(2+).</text>
    </kinetics>
</comment>
<comment type="subunit">
    <text evidence="1">Associates with the 50S ribosomal subunit.</text>
</comment>
<comment type="similarity">
    <text evidence="1">Belongs to the TRAFAC class TrmE-Era-EngA-EngB-Septin-like GTPase superfamily. EngA (Der) GTPase family.</text>
</comment>
<keyword id="KW-0342">GTP-binding</keyword>
<keyword id="KW-0547">Nucleotide-binding</keyword>
<keyword id="KW-1185">Reference proteome</keyword>
<keyword id="KW-0677">Repeat</keyword>
<keyword id="KW-0690">Ribosome biogenesis</keyword>
<dbReference type="EMBL" id="AE006468">
    <property type="protein sequence ID" value="AAL21413.1"/>
    <property type="molecule type" value="Genomic_DNA"/>
</dbReference>
<dbReference type="EMBL" id="AF140550">
    <property type="protein sequence ID" value="AAD25116.1"/>
    <property type="molecule type" value="Genomic_DNA"/>
</dbReference>
<dbReference type="RefSeq" id="NP_461454.1">
    <property type="nucleotide sequence ID" value="NC_003197.2"/>
</dbReference>
<dbReference type="RefSeq" id="WP_000249411.1">
    <property type="nucleotide sequence ID" value="NC_003197.2"/>
</dbReference>
<dbReference type="SMR" id="Q9XCI8"/>
<dbReference type="STRING" id="99287.STM2519"/>
<dbReference type="PaxDb" id="99287-STM2519"/>
<dbReference type="GeneID" id="1254041"/>
<dbReference type="KEGG" id="stm:STM2519"/>
<dbReference type="PATRIC" id="fig|99287.12.peg.2656"/>
<dbReference type="HOGENOM" id="CLU_016077_6_2_6"/>
<dbReference type="OMA" id="CNLPQYV"/>
<dbReference type="PhylomeDB" id="Q9XCI8"/>
<dbReference type="BioCyc" id="SENT99287:STM2519-MONOMER"/>
<dbReference type="Proteomes" id="UP000001014">
    <property type="component" value="Chromosome"/>
</dbReference>
<dbReference type="GO" id="GO:0005525">
    <property type="term" value="F:GTP binding"/>
    <property type="evidence" value="ECO:0007669"/>
    <property type="project" value="UniProtKB-UniRule"/>
</dbReference>
<dbReference type="GO" id="GO:0043022">
    <property type="term" value="F:ribosome binding"/>
    <property type="evidence" value="ECO:0000318"/>
    <property type="project" value="GO_Central"/>
</dbReference>
<dbReference type="GO" id="GO:0042254">
    <property type="term" value="P:ribosome biogenesis"/>
    <property type="evidence" value="ECO:0007669"/>
    <property type="project" value="UniProtKB-KW"/>
</dbReference>
<dbReference type="CDD" id="cd01894">
    <property type="entry name" value="EngA1"/>
    <property type="match status" value="1"/>
</dbReference>
<dbReference type="CDD" id="cd01895">
    <property type="entry name" value="EngA2"/>
    <property type="match status" value="1"/>
</dbReference>
<dbReference type="FunFam" id="3.30.300.20:FF:000004">
    <property type="entry name" value="GTPase Der"/>
    <property type="match status" value="1"/>
</dbReference>
<dbReference type="FunFam" id="3.40.50.300:FF:000040">
    <property type="entry name" value="GTPase Der"/>
    <property type="match status" value="1"/>
</dbReference>
<dbReference type="FunFam" id="3.40.50.300:FF:000057">
    <property type="entry name" value="GTPase Der"/>
    <property type="match status" value="1"/>
</dbReference>
<dbReference type="Gene3D" id="3.30.300.20">
    <property type="match status" value="1"/>
</dbReference>
<dbReference type="Gene3D" id="3.40.50.300">
    <property type="entry name" value="P-loop containing nucleotide triphosphate hydrolases"/>
    <property type="match status" value="2"/>
</dbReference>
<dbReference type="HAMAP" id="MF_00195">
    <property type="entry name" value="GTPase_Der"/>
    <property type="match status" value="1"/>
</dbReference>
<dbReference type="InterPro" id="IPR031166">
    <property type="entry name" value="G_ENGA"/>
</dbReference>
<dbReference type="InterPro" id="IPR006073">
    <property type="entry name" value="GTP-bd"/>
</dbReference>
<dbReference type="InterPro" id="IPR016484">
    <property type="entry name" value="GTPase_Der"/>
</dbReference>
<dbReference type="InterPro" id="IPR032859">
    <property type="entry name" value="KH_dom-like"/>
</dbReference>
<dbReference type="InterPro" id="IPR015946">
    <property type="entry name" value="KH_dom-like_a/b"/>
</dbReference>
<dbReference type="InterPro" id="IPR027417">
    <property type="entry name" value="P-loop_NTPase"/>
</dbReference>
<dbReference type="InterPro" id="IPR005225">
    <property type="entry name" value="Small_GTP-bd"/>
</dbReference>
<dbReference type="NCBIfam" id="TIGR03594">
    <property type="entry name" value="GTPase_EngA"/>
    <property type="match status" value="1"/>
</dbReference>
<dbReference type="NCBIfam" id="TIGR00231">
    <property type="entry name" value="small_GTP"/>
    <property type="match status" value="2"/>
</dbReference>
<dbReference type="PANTHER" id="PTHR43834">
    <property type="entry name" value="GTPASE DER"/>
    <property type="match status" value="1"/>
</dbReference>
<dbReference type="PANTHER" id="PTHR43834:SF6">
    <property type="entry name" value="GTPASE DER"/>
    <property type="match status" value="1"/>
</dbReference>
<dbReference type="Pfam" id="PF14714">
    <property type="entry name" value="KH_dom-like"/>
    <property type="match status" value="1"/>
</dbReference>
<dbReference type="Pfam" id="PF01926">
    <property type="entry name" value="MMR_HSR1"/>
    <property type="match status" value="2"/>
</dbReference>
<dbReference type="PIRSF" id="PIRSF006485">
    <property type="entry name" value="GTP-binding_EngA"/>
    <property type="match status" value="1"/>
</dbReference>
<dbReference type="PRINTS" id="PR00326">
    <property type="entry name" value="GTP1OBG"/>
</dbReference>
<dbReference type="SUPFAM" id="SSF52540">
    <property type="entry name" value="P-loop containing nucleoside triphosphate hydrolases"/>
    <property type="match status" value="2"/>
</dbReference>
<dbReference type="PROSITE" id="PS51712">
    <property type="entry name" value="G_ENGA"/>
    <property type="match status" value="2"/>
</dbReference>
<organism>
    <name type="scientific">Salmonella typhimurium (strain LT2 / SGSC1412 / ATCC 700720)</name>
    <dbReference type="NCBI Taxonomy" id="99287"/>
    <lineage>
        <taxon>Bacteria</taxon>
        <taxon>Pseudomonadati</taxon>
        <taxon>Pseudomonadota</taxon>
        <taxon>Gammaproteobacteria</taxon>
        <taxon>Enterobacterales</taxon>
        <taxon>Enterobacteriaceae</taxon>
        <taxon>Salmonella</taxon>
    </lineage>
</organism>
<accession>Q9XCI8</accession>
<gene>
    <name evidence="1" type="primary">der</name>
    <name type="synonym">engA</name>
    <name type="ordered locus">STM2519</name>
</gene>
<proteinExistence type="evidence at protein level"/>
<evidence type="ECO:0000255" key="1">
    <source>
        <dbReference type="HAMAP-Rule" id="MF_00195"/>
    </source>
</evidence>
<evidence type="ECO:0000269" key="2">
    <source>
    </source>
</evidence>
<evidence type="ECO:0000305" key="3"/>
<feature type="chain" id="PRO_0000179040" description="GTPase Der">
    <location>
        <begin position="1"/>
        <end position="490"/>
    </location>
</feature>
<feature type="domain" description="EngA-type G 1">
    <location>
        <begin position="3"/>
        <end position="166"/>
    </location>
</feature>
<feature type="domain" description="EngA-type G 2">
    <location>
        <begin position="203"/>
        <end position="376"/>
    </location>
</feature>
<feature type="domain" description="KH-like" evidence="1">
    <location>
        <begin position="377"/>
        <end position="461"/>
    </location>
</feature>
<feature type="binding site" evidence="1">
    <location>
        <begin position="9"/>
        <end position="16"/>
    </location>
    <ligand>
        <name>GTP</name>
        <dbReference type="ChEBI" id="CHEBI:37565"/>
        <label>1</label>
    </ligand>
</feature>
<feature type="binding site" evidence="1">
    <location>
        <begin position="56"/>
        <end position="60"/>
    </location>
    <ligand>
        <name>GTP</name>
        <dbReference type="ChEBI" id="CHEBI:37565"/>
        <label>1</label>
    </ligand>
</feature>
<feature type="binding site" evidence="1">
    <location>
        <begin position="118"/>
        <end position="121"/>
    </location>
    <ligand>
        <name>GTP</name>
        <dbReference type="ChEBI" id="CHEBI:37565"/>
        <label>1</label>
    </ligand>
</feature>
<feature type="binding site" evidence="1">
    <location>
        <begin position="209"/>
        <end position="216"/>
    </location>
    <ligand>
        <name>GTP</name>
        <dbReference type="ChEBI" id="CHEBI:37565"/>
        <label>2</label>
    </ligand>
</feature>
<feature type="binding site" evidence="1">
    <location>
        <begin position="256"/>
        <end position="260"/>
    </location>
    <ligand>
        <name>GTP</name>
        <dbReference type="ChEBI" id="CHEBI:37565"/>
        <label>2</label>
    </ligand>
</feature>
<feature type="binding site" evidence="1">
    <location>
        <begin position="321"/>
        <end position="324"/>
    </location>
    <ligand>
        <name>GTP</name>
        <dbReference type="ChEBI" id="CHEBI:37565"/>
        <label>2</label>
    </ligand>
</feature>
<feature type="sequence conflict" description="In Ref. 2; AAD25116." evidence="3" ref="2">
    <original>LGEERV</original>
    <variation>SVKKRL</variation>
    <location>
        <begin position="223"/>
        <end position="228"/>
    </location>
</feature>
<reference key="1">
    <citation type="journal article" date="2001" name="Nature">
        <title>Complete genome sequence of Salmonella enterica serovar Typhimurium LT2.</title>
        <authorList>
            <person name="McClelland M."/>
            <person name="Sanderson K.E."/>
            <person name="Spieth J."/>
            <person name="Clifton S.W."/>
            <person name="Latreille P."/>
            <person name="Courtney L."/>
            <person name="Porwollik S."/>
            <person name="Ali J."/>
            <person name="Dante M."/>
            <person name="Du F."/>
            <person name="Hou S."/>
            <person name="Layman D."/>
            <person name="Leonard S."/>
            <person name="Nguyen C."/>
            <person name="Scott K."/>
            <person name="Holmes A."/>
            <person name="Grewal N."/>
            <person name="Mulvaney E."/>
            <person name="Ryan E."/>
            <person name="Sun H."/>
            <person name="Florea L."/>
            <person name="Miller W."/>
            <person name="Stoneking T."/>
            <person name="Nhan M."/>
            <person name="Waterston R."/>
            <person name="Wilson R.K."/>
        </authorList>
    </citation>
    <scope>NUCLEOTIDE SEQUENCE [LARGE SCALE GENOMIC DNA]</scope>
    <source>
        <strain>LT2 / SGSC1412 / ATCC 700720</strain>
    </source>
</reference>
<reference key="2">
    <citation type="submission" date="1999-06" db="EMBL/GenBank/DDBJ databases">
        <title>Complete sequence of the xseA-hisS intergenic region of the S. enterica serotype Typhimurium genome and its distribution within the genus Salmonella.</title>
        <authorList>
            <person name="Kingsley R.A."/>
            <person name="van Amsterdam K."/>
            <person name="Edwards E.W."/>
            <person name="Hargis B.M."/>
            <person name="Baumler A.J."/>
        </authorList>
    </citation>
    <scope>NUCLEOTIDE SEQUENCE [GENOMIC DNA] OF 223-490</scope>
    <source>
        <strain>ATCC 14028 / SGSG 2980 / CDC 6516-60 / NCTC 12023</strain>
    </source>
</reference>
<reference key="3">
    <citation type="journal article" date="2007" name="Protein Sci.">
        <title>Functional analysis of the GTPases EngA and YhbZ encoded by Salmonella typhimurium.</title>
        <authorList>
            <person name="Lamb H.K."/>
            <person name="Thompson P."/>
            <person name="Elliott C."/>
            <person name="Charles I.G."/>
            <person name="Richards J."/>
            <person name="Lockyer M."/>
            <person name="Watkins N."/>
            <person name="Nichols C."/>
            <person name="Stammers D.K."/>
            <person name="Bagshaw C.R."/>
            <person name="Cooper A."/>
            <person name="Hawkins A.R."/>
        </authorList>
    </citation>
    <scope>BIOPHYSICOCHEMICAL PROPERTIES</scope>
    <scope>INTERACTION WITH S7</scope>
    <scope>GDP- AND GTP-BINDING</scope>
    <source>
        <strain>FIRN / SL3261</strain>
    </source>
</reference>
<protein>
    <recommendedName>
        <fullName evidence="1">GTPase Der</fullName>
    </recommendedName>
    <alternativeName>
        <fullName evidence="1">GTP-binding protein EngA</fullName>
    </alternativeName>
</protein>
<sequence length="490" mass="54972">MVPVVALVGRPNVGKSTLFNRLTRTRDALVADFPGLTRDRKYGRAEVEGREFICIDTGGIDGTEDGVETRMAEQSLLAIEEADVVLFMVDARAGLMPADEAIAKHLRSREKPTFLVANKTDGLDPDQAVVDFYSLGLGEIYPIAASHGRGVLSLLEHVLLPWMDDVAPQEEVDEDAEYWAQFEAEQNGEEAPEDDFDPQSLPIKLAIVGRPNVGKSTLTNRILGEERVVVYDMPGTTRDSIYIPMERDEREYVLIDTAGVRKRGKITDAVEKFSVIKTLQAIEDANVVLLVIDAREGISDQDLSLLGFILNSGRSLVIVVNKWDGLSQEVKEQVKETLDFRLGFIDFARVHFISALHGSGVGNLFESVREAYDSSTRRVSTAMLTRIMTMAVEDHQPPLVRGRRVKLKYAHAGGYNPPIVVIHGNQVKDLPDSYKRYLMNYFRKSLEVMGTPIRIQFKEGENPYANKRNTLTPTQMRKRKRLMKHIKKSK</sequence>